<organism>
    <name type="scientific">Proteus vulgaris</name>
    <dbReference type="NCBI Taxonomy" id="585"/>
    <lineage>
        <taxon>Bacteria</taxon>
        <taxon>Pseudomonadati</taxon>
        <taxon>Pseudomonadota</taxon>
        <taxon>Gammaproteobacteria</taxon>
        <taxon>Enterobacterales</taxon>
        <taxon>Morganellaceae</taxon>
        <taxon>Proteus</taxon>
    </lineage>
</organism>
<comment type="similarity">
    <text evidence="1">Belongs to the HupF/HypC family.</text>
</comment>
<proteinExistence type="inferred from homology"/>
<protein>
    <recommendedName>
        <fullName>Frd operon uncharacterized protein C</fullName>
    </recommendedName>
</protein>
<feature type="chain" id="PRO_0000201407" description="Frd operon uncharacterized protein C">
    <location>
        <begin position="1"/>
        <end position="96"/>
    </location>
</feature>
<name>YFRC_PROVU</name>
<sequence>MCLGIPGQVVEVGKTITENALVDVCGVKREVNIALVCEGEPDTMIGKWVLVHVGFAMSIVNEQEAQETLNALMAMGEVEDDVSAFLYGEESTAKRA</sequence>
<evidence type="ECO:0000305" key="1"/>
<dbReference type="EMBL" id="X06151">
    <property type="protein sequence ID" value="CAA29511.1"/>
    <property type="molecule type" value="Genomic_DNA"/>
</dbReference>
<dbReference type="PIR" id="S00119">
    <property type="entry name" value="S00119"/>
</dbReference>
<dbReference type="SMR" id="P20927"/>
<dbReference type="STRING" id="585.DR95_2063"/>
<dbReference type="eggNOG" id="COG0298">
    <property type="taxonomic scope" value="Bacteria"/>
</dbReference>
<dbReference type="GO" id="GO:1902670">
    <property type="term" value="F:carbon dioxide binding"/>
    <property type="evidence" value="ECO:0007669"/>
    <property type="project" value="TreeGrafter"/>
</dbReference>
<dbReference type="GO" id="GO:0005506">
    <property type="term" value="F:iron ion binding"/>
    <property type="evidence" value="ECO:0007669"/>
    <property type="project" value="TreeGrafter"/>
</dbReference>
<dbReference type="GO" id="GO:0051604">
    <property type="term" value="P:protein maturation"/>
    <property type="evidence" value="ECO:0007669"/>
    <property type="project" value="TreeGrafter"/>
</dbReference>
<dbReference type="FunFam" id="2.30.30.140:FF:000022">
    <property type="entry name" value="Hydrogenase assembly chaperone HybG"/>
    <property type="match status" value="1"/>
</dbReference>
<dbReference type="Gene3D" id="2.30.30.140">
    <property type="match status" value="1"/>
</dbReference>
<dbReference type="Gene3D" id="6.10.250.910">
    <property type="match status" value="1"/>
</dbReference>
<dbReference type="InterPro" id="IPR019812">
    <property type="entry name" value="Hydgase_assmbl_chp_CS"/>
</dbReference>
<dbReference type="InterPro" id="IPR001109">
    <property type="entry name" value="Hydrogenase_HupF/HypC"/>
</dbReference>
<dbReference type="NCBIfam" id="TIGR00074">
    <property type="entry name" value="hypC_hupF"/>
    <property type="match status" value="1"/>
</dbReference>
<dbReference type="NCBIfam" id="NF007721">
    <property type="entry name" value="PRK10413.1"/>
    <property type="match status" value="1"/>
</dbReference>
<dbReference type="PANTHER" id="PTHR35177">
    <property type="entry name" value="HYDROGENASE MATURATION FACTOR HYBG"/>
    <property type="match status" value="1"/>
</dbReference>
<dbReference type="PANTHER" id="PTHR35177:SF2">
    <property type="entry name" value="HYDROGENASE MATURATION FACTOR HYBG"/>
    <property type="match status" value="1"/>
</dbReference>
<dbReference type="Pfam" id="PF01455">
    <property type="entry name" value="HupF_HypC"/>
    <property type="match status" value="1"/>
</dbReference>
<dbReference type="PRINTS" id="PR00445">
    <property type="entry name" value="HUPFHYPC"/>
</dbReference>
<dbReference type="SUPFAM" id="SSF159127">
    <property type="entry name" value="HupF/HypC-like"/>
    <property type="match status" value="1"/>
</dbReference>
<dbReference type="PROSITE" id="PS01097">
    <property type="entry name" value="HUPF_HYPC"/>
    <property type="match status" value="1"/>
</dbReference>
<accession>P20927</accession>
<reference key="1">
    <citation type="journal article" date="1987" name="Eur. J. Biochem.">
        <title>Nucleotide sequence and comparative analysis of the frd operon encoding the fumarate reductase of Proteus vulgaris. Extensive sequence divergence of the membrane anchors and absence of an frd-linked ampC cephalosporinase gene.</title>
        <authorList>
            <person name="Cole S.T."/>
        </authorList>
    </citation>
    <scope>NUCLEOTIDE SEQUENCE [GENOMIC DNA]</scope>
</reference>